<keyword id="KW-0963">Cytoplasm</keyword>
<keyword id="KW-0342">GTP-binding</keyword>
<keyword id="KW-0378">Hydrolase</keyword>
<keyword id="KW-0460">Magnesium</keyword>
<keyword id="KW-0479">Metal-binding</keyword>
<keyword id="KW-0547">Nucleotide-binding</keyword>
<keyword id="KW-0630">Potassium</keyword>
<keyword id="KW-0819">tRNA processing</keyword>
<accession>A6UEE9</accession>
<dbReference type="EC" id="3.6.-.-" evidence="1"/>
<dbReference type="EMBL" id="CP000738">
    <property type="protein sequence ID" value="ABR62029.1"/>
    <property type="molecule type" value="Genomic_DNA"/>
</dbReference>
<dbReference type="RefSeq" id="WP_012067410.1">
    <property type="nucleotide sequence ID" value="NC_009636.1"/>
</dbReference>
<dbReference type="RefSeq" id="YP_001328864.1">
    <property type="nucleotide sequence ID" value="NC_009636.1"/>
</dbReference>
<dbReference type="SMR" id="A6UEE9"/>
<dbReference type="STRING" id="366394.Smed_3205"/>
<dbReference type="GeneID" id="61610787"/>
<dbReference type="KEGG" id="smd:Smed_3205"/>
<dbReference type="PATRIC" id="fig|366394.8.peg.6443"/>
<dbReference type="eggNOG" id="COG0486">
    <property type="taxonomic scope" value="Bacteria"/>
</dbReference>
<dbReference type="HOGENOM" id="CLU_019624_3_1_5"/>
<dbReference type="OrthoDB" id="9805918at2"/>
<dbReference type="Proteomes" id="UP000001108">
    <property type="component" value="Chromosome"/>
</dbReference>
<dbReference type="GO" id="GO:0005737">
    <property type="term" value="C:cytoplasm"/>
    <property type="evidence" value="ECO:0007669"/>
    <property type="project" value="UniProtKB-SubCell"/>
</dbReference>
<dbReference type="GO" id="GO:0005525">
    <property type="term" value="F:GTP binding"/>
    <property type="evidence" value="ECO:0007669"/>
    <property type="project" value="UniProtKB-UniRule"/>
</dbReference>
<dbReference type="GO" id="GO:0003924">
    <property type="term" value="F:GTPase activity"/>
    <property type="evidence" value="ECO:0007669"/>
    <property type="project" value="UniProtKB-UniRule"/>
</dbReference>
<dbReference type="GO" id="GO:0046872">
    <property type="term" value="F:metal ion binding"/>
    <property type="evidence" value="ECO:0007669"/>
    <property type="project" value="UniProtKB-KW"/>
</dbReference>
<dbReference type="GO" id="GO:0030488">
    <property type="term" value="P:tRNA methylation"/>
    <property type="evidence" value="ECO:0007669"/>
    <property type="project" value="TreeGrafter"/>
</dbReference>
<dbReference type="GO" id="GO:0002098">
    <property type="term" value="P:tRNA wobble uridine modification"/>
    <property type="evidence" value="ECO:0007669"/>
    <property type="project" value="TreeGrafter"/>
</dbReference>
<dbReference type="CDD" id="cd04164">
    <property type="entry name" value="trmE"/>
    <property type="match status" value="1"/>
</dbReference>
<dbReference type="CDD" id="cd14858">
    <property type="entry name" value="TrmE_N"/>
    <property type="match status" value="1"/>
</dbReference>
<dbReference type="FunFam" id="3.30.1360.120:FF:000007">
    <property type="entry name" value="tRNA modification GTPase GTPBP3, mitochondrial"/>
    <property type="match status" value="1"/>
</dbReference>
<dbReference type="Gene3D" id="3.40.50.300">
    <property type="entry name" value="P-loop containing nucleotide triphosphate hydrolases"/>
    <property type="match status" value="1"/>
</dbReference>
<dbReference type="Gene3D" id="3.30.1360.120">
    <property type="entry name" value="Probable tRNA modification gtpase trme, domain 1"/>
    <property type="match status" value="1"/>
</dbReference>
<dbReference type="Gene3D" id="1.20.120.430">
    <property type="entry name" value="tRNA modification GTPase MnmE domain 2"/>
    <property type="match status" value="1"/>
</dbReference>
<dbReference type="HAMAP" id="MF_00379">
    <property type="entry name" value="GTPase_MnmE"/>
    <property type="match status" value="1"/>
</dbReference>
<dbReference type="InterPro" id="IPR031168">
    <property type="entry name" value="G_TrmE"/>
</dbReference>
<dbReference type="InterPro" id="IPR006073">
    <property type="entry name" value="GTP-bd"/>
</dbReference>
<dbReference type="InterPro" id="IPR018948">
    <property type="entry name" value="GTP-bd_TrmE_N"/>
</dbReference>
<dbReference type="InterPro" id="IPR004520">
    <property type="entry name" value="GTPase_MnmE"/>
</dbReference>
<dbReference type="InterPro" id="IPR027368">
    <property type="entry name" value="MnmE_dom2"/>
</dbReference>
<dbReference type="InterPro" id="IPR025867">
    <property type="entry name" value="MnmE_helical"/>
</dbReference>
<dbReference type="InterPro" id="IPR027417">
    <property type="entry name" value="P-loop_NTPase"/>
</dbReference>
<dbReference type="InterPro" id="IPR005225">
    <property type="entry name" value="Small_GTP-bd"/>
</dbReference>
<dbReference type="InterPro" id="IPR027266">
    <property type="entry name" value="TrmE/GcvT_dom1"/>
</dbReference>
<dbReference type="NCBIfam" id="NF003661">
    <property type="entry name" value="PRK05291.1-3"/>
    <property type="match status" value="1"/>
</dbReference>
<dbReference type="NCBIfam" id="TIGR00231">
    <property type="entry name" value="small_GTP"/>
    <property type="match status" value="1"/>
</dbReference>
<dbReference type="PANTHER" id="PTHR42714">
    <property type="entry name" value="TRNA MODIFICATION GTPASE GTPBP3"/>
    <property type="match status" value="1"/>
</dbReference>
<dbReference type="PANTHER" id="PTHR42714:SF2">
    <property type="entry name" value="TRNA MODIFICATION GTPASE GTPBP3, MITOCHONDRIAL"/>
    <property type="match status" value="1"/>
</dbReference>
<dbReference type="Pfam" id="PF01926">
    <property type="entry name" value="MMR_HSR1"/>
    <property type="match status" value="1"/>
</dbReference>
<dbReference type="Pfam" id="PF12631">
    <property type="entry name" value="MnmE_helical"/>
    <property type="match status" value="1"/>
</dbReference>
<dbReference type="Pfam" id="PF10396">
    <property type="entry name" value="TrmE_N"/>
    <property type="match status" value="1"/>
</dbReference>
<dbReference type="PRINTS" id="PR00449">
    <property type="entry name" value="RASTRNSFRMNG"/>
</dbReference>
<dbReference type="SUPFAM" id="SSF52540">
    <property type="entry name" value="P-loop containing nucleoside triphosphate hydrolases"/>
    <property type="match status" value="1"/>
</dbReference>
<dbReference type="SUPFAM" id="SSF116878">
    <property type="entry name" value="TrmE connector domain"/>
    <property type="match status" value="1"/>
</dbReference>
<dbReference type="PROSITE" id="PS51709">
    <property type="entry name" value="G_TRME"/>
    <property type="match status" value="1"/>
</dbReference>
<gene>
    <name evidence="1" type="primary">mnmE</name>
    <name evidence="1" type="synonym">trmE</name>
    <name type="ordered locus">Smed_3205</name>
</gene>
<feature type="chain" id="PRO_0000345907" description="tRNA modification GTPase MnmE">
    <location>
        <begin position="1"/>
        <end position="440"/>
    </location>
</feature>
<feature type="domain" description="TrmE-type G">
    <location>
        <begin position="217"/>
        <end position="366"/>
    </location>
</feature>
<feature type="binding site" evidence="1">
    <location>
        <position position="23"/>
    </location>
    <ligand>
        <name>(6S)-5-formyl-5,6,7,8-tetrahydrofolate</name>
        <dbReference type="ChEBI" id="CHEBI:57457"/>
    </ligand>
</feature>
<feature type="binding site" evidence="1">
    <location>
        <position position="80"/>
    </location>
    <ligand>
        <name>(6S)-5-formyl-5,6,7,8-tetrahydrofolate</name>
        <dbReference type="ChEBI" id="CHEBI:57457"/>
    </ligand>
</feature>
<feature type="binding site" evidence="1">
    <location>
        <position position="120"/>
    </location>
    <ligand>
        <name>(6S)-5-formyl-5,6,7,8-tetrahydrofolate</name>
        <dbReference type="ChEBI" id="CHEBI:57457"/>
    </ligand>
</feature>
<feature type="binding site" evidence="1">
    <location>
        <begin position="227"/>
        <end position="232"/>
    </location>
    <ligand>
        <name>GTP</name>
        <dbReference type="ChEBI" id="CHEBI:37565"/>
    </ligand>
</feature>
<feature type="binding site" evidence="1">
    <location>
        <position position="227"/>
    </location>
    <ligand>
        <name>K(+)</name>
        <dbReference type="ChEBI" id="CHEBI:29103"/>
    </ligand>
</feature>
<feature type="binding site" evidence="1">
    <location>
        <position position="231"/>
    </location>
    <ligand>
        <name>Mg(2+)</name>
        <dbReference type="ChEBI" id="CHEBI:18420"/>
    </ligand>
</feature>
<feature type="binding site" evidence="1">
    <location>
        <begin position="246"/>
        <end position="252"/>
    </location>
    <ligand>
        <name>GTP</name>
        <dbReference type="ChEBI" id="CHEBI:37565"/>
    </ligand>
</feature>
<feature type="binding site" evidence="1">
    <location>
        <position position="246"/>
    </location>
    <ligand>
        <name>K(+)</name>
        <dbReference type="ChEBI" id="CHEBI:29103"/>
    </ligand>
</feature>
<feature type="binding site" evidence="1">
    <location>
        <position position="248"/>
    </location>
    <ligand>
        <name>K(+)</name>
        <dbReference type="ChEBI" id="CHEBI:29103"/>
    </ligand>
</feature>
<feature type="binding site" evidence="1">
    <location>
        <position position="251"/>
    </location>
    <ligand>
        <name>K(+)</name>
        <dbReference type="ChEBI" id="CHEBI:29103"/>
    </ligand>
</feature>
<feature type="binding site" evidence="1">
    <location>
        <position position="252"/>
    </location>
    <ligand>
        <name>Mg(2+)</name>
        <dbReference type="ChEBI" id="CHEBI:18420"/>
    </ligand>
</feature>
<feature type="binding site" evidence="1">
    <location>
        <begin position="271"/>
        <end position="274"/>
    </location>
    <ligand>
        <name>GTP</name>
        <dbReference type="ChEBI" id="CHEBI:37565"/>
    </ligand>
</feature>
<feature type="binding site" evidence="1">
    <location>
        <position position="440"/>
    </location>
    <ligand>
        <name>(6S)-5-formyl-5,6,7,8-tetrahydrofolate</name>
        <dbReference type="ChEBI" id="CHEBI:57457"/>
    </ligand>
</feature>
<comment type="function">
    <text evidence="1">Exhibits a very high intrinsic GTPase hydrolysis rate. Involved in the addition of a carboxymethylaminomethyl (cmnm) group at the wobble position (U34) of certain tRNAs, forming tRNA-cmnm(5)s(2)U34.</text>
</comment>
<comment type="cofactor">
    <cofactor evidence="1">
        <name>K(+)</name>
        <dbReference type="ChEBI" id="CHEBI:29103"/>
    </cofactor>
    <text evidence="1">Binds 1 potassium ion per subunit.</text>
</comment>
<comment type="subunit">
    <text evidence="1">Homodimer. Heterotetramer of two MnmE and two MnmG subunits.</text>
</comment>
<comment type="subcellular location">
    <subcellularLocation>
        <location evidence="1">Cytoplasm</location>
    </subcellularLocation>
</comment>
<comment type="similarity">
    <text evidence="1">Belongs to the TRAFAC class TrmE-Era-EngA-EngB-Septin-like GTPase superfamily. TrmE GTPase family.</text>
</comment>
<reference key="1">
    <citation type="submission" date="2007-06" db="EMBL/GenBank/DDBJ databases">
        <title>Complete sequence of Sinorhizobium medicae WSM419 chromosome.</title>
        <authorList>
            <consortium name="US DOE Joint Genome Institute"/>
            <person name="Copeland A."/>
            <person name="Lucas S."/>
            <person name="Lapidus A."/>
            <person name="Barry K."/>
            <person name="Glavina del Rio T."/>
            <person name="Dalin E."/>
            <person name="Tice H."/>
            <person name="Pitluck S."/>
            <person name="Chain P."/>
            <person name="Malfatti S."/>
            <person name="Shin M."/>
            <person name="Vergez L."/>
            <person name="Schmutz J."/>
            <person name="Larimer F."/>
            <person name="Land M."/>
            <person name="Hauser L."/>
            <person name="Kyrpides N."/>
            <person name="Mikhailova N."/>
            <person name="Reeve W.G."/>
            <person name="Richardson P."/>
        </authorList>
    </citation>
    <scope>NUCLEOTIDE SEQUENCE [LARGE SCALE GENOMIC DNA]</scope>
    <source>
        <strain>WSM419</strain>
    </source>
</reference>
<proteinExistence type="inferred from homology"/>
<organism>
    <name type="scientific">Sinorhizobium medicae (strain WSM419)</name>
    <name type="common">Ensifer medicae</name>
    <dbReference type="NCBI Taxonomy" id="366394"/>
    <lineage>
        <taxon>Bacteria</taxon>
        <taxon>Pseudomonadati</taxon>
        <taxon>Pseudomonadota</taxon>
        <taxon>Alphaproteobacteria</taxon>
        <taxon>Hyphomicrobiales</taxon>
        <taxon>Rhizobiaceae</taxon>
        <taxon>Sinorhizobium/Ensifer group</taxon>
        <taxon>Sinorhizobium</taxon>
    </lineage>
</organism>
<evidence type="ECO:0000255" key="1">
    <source>
        <dbReference type="HAMAP-Rule" id="MF_00379"/>
    </source>
</evidence>
<sequence>MQFTDTIYALSSGSPPAGVALIRVSGPATADALARLCGPLPPARVATLRTIRTRNSDILDSGLVLYFPGPASFTGEDCCELQVHGGRAVVSAILDELAAMDGLRHAEAGEFARRAFQNGKLDLVEVEGLADLIAAETEMQRRLAVEQSGGGQSALYAGWARRLTHARAMIEAELDFADEDDIPGSVSAAIWTDIGRLREEIDEHIARAGVAEIIRDGLKIVIAGEPNAGKSSLLNALAQRDIAIVTEIAGTTRDVLSVDLSLAGFSVKLFDTAGLRETDEVVEREGIRRARQVIADADLVLLLSEKPSDFRLDEWQPGKSVPVIRVATKVDRPMPRWKTSEADVFLSTRTGEGMDKLLAMLQAHLPDLAGNTALSMPSRRRHVDCLRQAGAALVRSMEARELELQAEQLRQAGDALGRITGRVDVEKLLDVIFSEFCIGK</sequence>
<protein>
    <recommendedName>
        <fullName evidence="1">tRNA modification GTPase MnmE</fullName>
        <ecNumber evidence="1">3.6.-.-</ecNumber>
    </recommendedName>
</protein>
<name>MNME_SINMW</name>